<sequence length="3066" mass="349418">MSLALNDLLICCRQLEHDRATERRKEVDKFKRLIQDPETVQHLDRHSDSKQGKYLNWDAVFRFLQKYIQKEMESLRTAKSNVSATTQSSRQKKMQEISSLVRYFIKCANKRAPRLKCQDLLNYVMDTVKDSSNGLTYGADCSNILLKDILSVRKYWCEVSQQQWLELFSLYFRLYLKPSQDINRVLVARIIHAVTRGCCSQTDGLPSKFLDLFSKAIQYARQEKSSPGLSHILAALNIFLKSLAVNFRKRVCEAGDEILPTLLYIWTQHRLNDSLKEVIIELIQLQIYIHHPQGARAPEEGAYESMKWKSILYNLYDLLVNEISHIGSRGKYSSGSRNIAVKENLIDLMADICYQLFDADTRSVEISQSYVTQRESTDYSVPCKRRKIDVGWEVIKDYLQKSQSDFDLVPWLQITTRLISKYPSSLPNCELSPLILILYQLLPQQRRGERIPYVLRCLKEVALCQGKKSNLESSQKSDLLKLWIKIWSITFRGISSGQTQTENFGLLEAIIQGSLVELDREFWKLFTGSACKPSSPSVCCLTLALSICVVPDAIKMGTEQSVCEANRSFSVKESIMRWLLFYQLEDDLEDSTELPPILQSNFPHLVVEKILVSLTMKNSKAAMKFFQSVPECEQHCEDKEEPSFSEVEELFLQTTFDKMDFLTTVKEYAVEKFQSSVGFSVQQNLKESLDHYLLGLSEQLLSNYSSEITSSETLVRCSSLLVGVLGCYCYMGIITEDEAHKSELFQKAKSLMQCAGESISLFKNKTNEESRIGSLRNVMHLCTSCLCIHTKHTPNKIASGFFLRLLTSKLMNDIADICKSLASCTKKPLDHGVHPGEDDEDGGGCDSLMEAEGPSSTGLSTAYPASSVSDANDYGENQNAVGAMSPLAADYLSKQDHLLLDMLRFLGRSVTASQSHTVSFRGADIRRKLLLLLDSSILDLMKPLHLHMYLVLLKDLPGNEHSLPMEDVVELLQPLSLVCSLHRRDQDVCKTILSNVLHIVTNLGQGSVDMESTRIAQGHFLTVMGAFWHLTKEKKCVFSVRMALVKCLQTLLEADPYSEWAILNVKGQDFPVNEAFSQFLADDHHQVRMLAAGSVNRLFQDMRQGDFSRSLKALPLKFQQTSFNNAYTTAEAGIRGLLCDSQNPDLLDEIYNRKSVLLMMIAVVLHCSPVCEKQALFALCKSVKENRLEPHLVKKVLEKVSESFGCRSLEDFMISHLDYLVLEWLNLQDTEYSLSSFPFMLLNYTSIEDFYRSCYKILIPHLVIRSHFDEVKSIANQIQKCWKSLLVDCFPKILVHILPYFAYEGTRDSYVSQKRETATKVYDTLKGEDFLGKQIDQVFISNLPEIVVELLMTLHETADSADSDASQSATALCDFSGDLDPAPNPPYFPSHVIQATFAYISNCHKTKFKSILEILSKIPDSYQKILLAICEQAAETNNVFKKHRILKIYHLFVSLLLKDIQSGLGGAWAFVLRDVIYTLIHYINKRSSHFTDVSLRSFSLCCDLLSRVCHTAVTQCKDALESHLHVIVGTLIPLVDYQEVQEQVLDLLKYLVIDNKDNKNLSVTIKLLDPFPDHVIFKDLRLTQQKIKYSGGPFSLLEEINHFLSVSAYNPLPLTRLEGLKDLRRQLEQHKDQMLDLLRASQDNPQDGIVVKLVVSLLQLSKMAVNQTGEREVLEAVGRCLGEIGPLDFSTIAVQHNKDVSYTKAYGLPEDRELQWTLIMLTALNNTLVEDSVKIRSAAATCLKNILATKIGHIFWENYKTSADPMLTYLQPFRTSRKKFLEVPRSVKEDVLEGLDAVNLWVPQSESHDIWIKTLTCAFLDSGGINSEILQLLKPMCEVKTDFCQMLLPYLIHDVLLQDTHESWRTLLSAHVRGFFTSCFKHSSQASRSATPANSDSESENFLRCCLDKKSQRTMLAVVDYLRRQKRPSSGTAFDDAFWLDLNYLEVAKVAQSCSAHFTALLYAEIYSDKKSTDEQEKRSPTFEEGSQGTTISSLSEKSKEETGISLQDLLLEIYRSIGEPDSLYGCGGGKMLQPLTRIRTYEHEATWEKALVTYDLETSISSSTRQSGIIQALQNLGLSHILSVYLKGLDYERREWCAELQELRYQAAWRNMQWGLCASAGQEVEGTSYHESLYNALQCLRNREFSTFYESLRYASLFRVKEVEELSKGSLESVYSLYPTLSRLQAIGELENSGELFSRSVTDRERSEAYWKWQKHSQLLKDSDFSFQEPLMALRTVILETLVQKEMERSQGACSKDILTKHLVEFSVLARTFKNTQLPERAIFKIKQYNSAICGISEWHLEEAQVFWAKKEQSLALSILKQMIKKLDSSFKDKENDAGLKVIYAECLRVCGSWLAETCLENPAVIMQTYLEKAVKVAGSYDGNSRELRNGQMKAFLSLARFSDTQYQRIENYMKSSEFENKQTLLKRAKEEVGLLREHKIQTNRYTVKVQRELELDECALRALREDRKRFLCKAVENYINCLLSGEEHDLWVFRLCSLWLENSGVSEVNGMMKKDGMKISSYKFLPLMYQLAARMGTKMTGGLGFHEVLNNLISRISLDHPHHTLFIILALANANKDEFLSKPETTRRSRITKSTSKENSHLDEDRTEAATRIIHSIRSKRCKMVKDMEALCDAYIILANMDASQWRAQRKGINIPANQPITKLKNLEDVVVPTMEIKVDPTGEYENLVTIKSFKTEFRLAGGLNLPKIIDCVGSDGKERRQLVKGRDDLRQDAVMQQVFQMCNTLLQRNTETRKRKLTICTYKVVPLSQRSGVLEWCTGTVPIGEYLVNSEDGAHRRYRPNDFSANQCQKKMMEVQKKSFEEKYDTFMTICQNFEPVFRYFCMEKFLDPAVWFEKRLAYTRSVATSSIVGYILGLGDRHVQNILINEQSAELVHIDLGVAFEQGKILPTPETVPFRLSRDIVDGMGITGVEGVFRRCCEKTMEVMRSSQETLLTIVEVLLYDPLFDWTMNPLKALYLQQRPEDESDLHSTPNADDQECKQSLSDTDQSFNKVAERVLMRLQEKLKGVEEGTVLSVGGQVNLLIQQAMDPKNLSRLFPGWKAWV</sequence>
<organism>
    <name type="scientific">Mus musculus</name>
    <name type="common">Mouse</name>
    <dbReference type="NCBI Taxonomy" id="10090"/>
    <lineage>
        <taxon>Eukaryota</taxon>
        <taxon>Metazoa</taxon>
        <taxon>Chordata</taxon>
        <taxon>Craniata</taxon>
        <taxon>Vertebrata</taxon>
        <taxon>Euteleostomi</taxon>
        <taxon>Mammalia</taxon>
        <taxon>Eutheria</taxon>
        <taxon>Euarchontoglires</taxon>
        <taxon>Glires</taxon>
        <taxon>Rodentia</taxon>
        <taxon>Myomorpha</taxon>
        <taxon>Muroidea</taxon>
        <taxon>Muridae</taxon>
        <taxon>Murinae</taxon>
        <taxon>Mus</taxon>
        <taxon>Mus</taxon>
    </lineage>
</organism>
<evidence type="ECO:0000250" key="1"/>
<evidence type="ECO:0000250" key="2">
    <source>
        <dbReference type="UniProtKB" id="Q13315"/>
    </source>
</evidence>
<evidence type="ECO:0000255" key="3">
    <source>
        <dbReference type="PROSITE-ProRule" id="PRU00269"/>
    </source>
</evidence>
<evidence type="ECO:0000255" key="4">
    <source>
        <dbReference type="PROSITE-ProRule" id="PRU00534"/>
    </source>
</evidence>
<evidence type="ECO:0000255" key="5">
    <source>
        <dbReference type="PROSITE-ProRule" id="PRU00535"/>
    </source>
</evidence>
<evidence type="ECO:0000256" key="6">
    <source>
        <dbReference type="SAM" id="MobiDB-lite"/>
    </source>
</evidence>
<evidence type="ECO:0000269" key="7">
    <source>
    </source>
</evidence>
<evidence type="ECO:0000269" key="8">
    <source>
    </source>
</evidence>
<evidence type="ECO:0000269" key="9">
    <source>
    </source>
</evidence>
<evidence type="ECO:0000269" key="10">
    <source>
    </source>
</evidence>
<evidence type="ECO:0000269" key="11">
    <source>
    </source>
</evidence>
<evidence type="ECO:0000269" key="12">
    <source>
    </source>
</evidence>
<evidence type="ECO:0000269" key="13">
    <source>
    </source>
</evidence>
<evidence type="ECO:0000269" key="14">
    <source>
    </source>
</evidence>
<evidence type="ECO:0000305" key="15"/>
<evidence type="ECO:0007744" key="16">
    <source>
    </source>
</evidence>
<protein>
    <recommendedName>
        <fullName>Serine-protein kinase ATM</fullName>
        <ecNumber evidence="7">2.7.11.1</ecNumber>
    </recommendedName>
    <alternativeName>
        <fullName>Ataxia telangiectasia mutated homolog</fullName>
        <shortName>A-T mutated homolog</shortName>
    </alternativeName>
</protein>
<comment type="function">
    <text evidence="2 7 8 9">Serine/threonine protein kinase which activates checkpoint signaling upon double strand breaks (DSBs), apoptosis and genotoxic stresses such as ionizing ultraviolet A light (UVA), thereby acting as a DNA damage sensor (PubMed:19047460). Recognizes the substrate consensus sequence [ST]-Q (PubMed:19047460). Phosphorylates 'Ser-139' of histone variant H2AX at double strand breaks (DSBs), thereby regulating DNA damage response mechanism (PubMed:11571274). Also plays a role in pre-B cell allelic exclusion, a process leading to expression of a single immunoglobulin heavy chain allele to enforce clonality and monospecific recognition by the B-cell antigen receptor (BCR) expressed on individual B-lymphocytes (By similarity). After the introduction of DNA breaks by the RAG complex on one immunoglobulin allele, acts by mediating a repositioning of the second allele to pericentromeric heterochromatin, preventing accessibility to the RAG complex and recombination of the second allele (PubMed:19448632). Also involved in signal transduction and cell cycle control (By similarity). May function as a tumor suppressor (By similarity). Necessary for activation of ABL1 and SAPK (By similarity). Phosphorylates DYRK2, CHEK2, p53/TP53, FBXW7, FANCD2, NFKBIA, BRCA1, CREBBP/CBP, RBBP8/CTIP, FBXO46, MRE11, nibrin (NBN), RAD50, RAD17, PELI1, TERF1, UFL1, RAD9, UBQLN4 and DCLRE1C (By similarity). May play a role in vesicle and/or protein transport (By similarity). Could play a role in T-cell development, gonad and neurological function (By similarity). Binds DNA ends (By similarity). Plays a role in replication-dependent histone mRNA degradation (By similarity). Phosphorylation of DYRK2 in nucleus in response to genotoxic stress prevents its MDM2-mediated ubiquitination and subsequent proteasome degradation (By similarity). Phosphorylates ATF2 which stimulates its function in DNA damage response (By similarity). Phosphorylates ERCC6 which is essential for its chromatin remodeling activity at DNA double-strand breaks (By similarity). Phosphorylates TTC5/STRAP at 'Ser-203' in the cytoplasm in response to DNA damage, which promotes TTC5/STRAP nuclear localization (By similarity). Also involved in pexophagy by mediating phosphorylation of PEX5: translocated to peroxisomes in response to reactive oxygen species (ROS), and catalyzes phosphorylation of PEX5, promoting PEX5 ubiquitination and induction of pexophagy (By similarity).</text>
</comment>
<comment type="catalytic activity">
    <reaction evidence="7">
        <text>L-seryl-[protein] + ATP = O-phospho-L-seryl-[protein] + ADP + H(+)</text>
        <dbReference type="Rhea" id="RHEA:17989"/>
        <dbReference type="Rhea" id="RHEA-COMP:9863"/>
        <dbReference type="Rhea" id="RHEA-COMP:11604"/>
        <dbReference type="ChEBI" id="CHEBI:15378"/>
        <dbReference type="ChEBI" id="CHEBI:29999"/>
        <dbReference type="ChEBI" id="CHEBI:30616"/>
        <dbReference type="ChEBI" id="CHEBI:83421"/>
        <dbReference type="ChEBI" id="CHEBI:456216"/>
        <dbReference type="EC" id="2.7.11.1"/>
    </reaction>
    <physiologicalReaction direction="left-to-right" evidence="7">
        <dbReference type="Rhea" id="RHEA:17990"/>
    </physiologicalReaction>
</comment>
<comment type="catalytic activity">
    <reaction evidence="7">
        <text>L-threonyl-[protein] + ATP = O-phospho-L-threonyl-[protein] + ADP + H(+)</text>
        <dbReference type="Rhea" id="RHEA:46608"/>
        <dbReference type="Rhea" id="RHEA-COMP:11060"/>
        <dbReference type="Rhea" id="RHEA-COMP:11605"/>
        <dbReference type="ChEBI" id="CHEBI:15378"/>
        <dbReference type="ChEBI" id="CHEBI:30013"/>
        <dbReference type="ChEBI" id="CHEBI:30616"/>
        <dbReference type="ChEBI" id="CHEBI:61977"/>
        <dbReference type="ChEBI" id="CHEBI:456216"/>
        <dbReference type="EC" id="2.7.11.1"/>
    </reaction>
</comment>
<comment type="activity regulation">
    <text evidence="2">Activated by the MRN (MRE11-RAD50-NBS1) complex in response to DNA double strand breaks (DSBs), which recruits ATM to DSBs and promotes its activation. Inhibited by wortmannin.</text>
</comment>
<comment type="subunit">
    <text evidence="2 11 14">Homodimer (By similarity). Dimers or tetramers in inactive state (By similarity). On DNA damage, autophosphorylation dissociates ATM into monomers rendering them catalytically active (By similarity). Binds p53/TP53, ABL1, BRCA1 and TERF1 (By similarity). Interacts with NBN (via FxF/Y motif) (By similarity). Part of the BRCA1-associated genome surveillance complex (BASC), which contains BRCA1, MSH2, MSH6, MLH1, ATM, BLM, PMS2 and the RAD50-MRE11-NBN protein complex (By similarity). This association could be a dynamic process changing throughout the cell cycle and within subnuclear domains (By similarity). Interacts with RAD17; DNA damage promotes the association (By similarity). Interacts with EEF1E1; the interaction, induced on DNA damage, up-regulates TP53 (By similarity). Interacts with KAT8, NABP2, ATMIN and CEP164 (By similarity). Interacts with AP2B1 and AP3B2; the interaction occurs in cytoplasmic vesicles (PubMed:9707615). Interacts with TELO2 and TTI1 (By similarity). Interacts with DDX1 (By similarity). Interacts with BRAT1 (By similarity). Interacts with CYREN (via XLF motif) (PubMed:30017584). Interacts (via microbody targeting signal) with PEX5; promoting translocation to peroxisomes in response to reactive oxygen species (ROS) (By similarity).</text>
</comment>
<comment type="subcellular location">
    <subcellularLocation>
        <location evidence="2">Nucleus</location>
    </subcellularLocation>
    <subcellularLocation>
        <location evidence="2">Cytoplasmic vesicle</location>
    </subcellularLocation>
    <subcellularLocation>
        <location evidence="10">Cytoplasm</location>
        <location evidence="10">Cytoskeleton</location>
        <location evidence="10">Microtubule organizing center</location>
        <location evidence="10">Centrosome</location>
    </subcellularLocation>
    <subcellularLocation>
        <location evidence="2">Peroxisome matrix</location>
    </subcellularLocation>
    <text evidence="2">Primarily nuclear. Found also in endocytic vesicles in association with beta-adaptin. Translocated to peroxisomes in response to reactive oxygen species (ROS) by PEX5.</text>
</comment>
<comment type="tissue specificity">
    <text>Expressed in brain, skeletal muscle, testis, followed by spleen, lung, kidney, heart, liver and thymus. Ubiquitously expressed in embryonal tissues.</text>
</comment>
<comment type="developmental stage">
    <text evidence="13">Highest expression in embryonic central nervous system, from 13.5 dpc day and during the whole cerebellar development. Decreased expression when maturation occurs.</text>
</comment>
<comment type="domain">
    <text evidence="2">The FATC domain is required for interaction with KAT5.</text>
</comment>
<comment type="PTM">
    <text evidence="1 8">Phosphorylated by NUAK1/ARK5 (By similarity). Autophosphorylation on Ser-367, Ser-1899, Ser-1987 correlates with DNA damage-mediated activation of the kinase.</text>
</comment>
<comment type="PTM">
    <text evidence="2">Phosphorylated by NUAK1/ARK5. Autophosphorylation on Ser-367, Ser-1899, Ser-1987 correlates with DNA damage-mediated activation of the kinase. During the late stages of DNA damage response, dephosphorylated following deacetylation by SIRT7, leading to ATM deactivation.</text>
</comment>
<comment type="PTM">
    <text evidence="2">Acetylation, on DNA damage, is required for activation of the kinase activity, dimer-monomer transition, and subsequent autophosphorylation on Ser-1987. Acetylated in vitro by KAT5/TIP60. Deacetylated by SIRT7 during the late stages of DNA damage response, promoting ATM dephosphorylation and subsequent deactivation.</text>
</comment>
<comment type="disruption phenotype">
    <text evidence="12">Atm-disrupted mice recapitulate the human ataxia telangiectasia phenotype. Mice homozygous for the disrupted Atm allele display growth retardation, neurologic dysfunction, male and female infertility secondary to the absence of mature gametes, defects in T lymphocyte maturation, and extreme sensitivity to gamma-irradiation.</text>
</comment>
<comment type="similarity">
    <text evidence="15">Belongs to the PI3/PI4-kinase family. ATM subfamily.</text>
</comment>
<name>ATM_MOUSE</name>
<dbReference type="EC" id="2.7.11.1" evidence="7"/>
<dbReference type="EMBL" id="U43678">
    <property type="protein sequence ID" value="AAC52673.1"/>
    <property type="molecule type" value="mRNA"/>
</dbReference>
<dbReference type="EMBL" id="AC079869">
    <property type="status" value="NOT_ANNOTATED_CDS"/>
    <property type="molecule type" value="Genomic_DNA"/>
</dbReference>
<dbReference type="EMBL" id="AC156640">
    <property type="status" value="NOT_ANNOTATED_CDS"/>
    <property type="molecule type" value="Genomic_DNA"/>
</dbReference>
<dbReference type="RefSeq" id="NP_031525.2">
    <property type="nucleotide sequence ID" value="NM_007499.2"/>
</dbReference>
<dbReference type="SMR" id="Q62388"/>
<dbReference type="BioGRID" id="198236">
    <property type="interactions" value="37"/>
</dbReference>
<dbReference type="CORUM" id="Q62388"/>
<dbReference type="FunCoup" id="Q62388">
    <property type="interactions" value="3626"/>
</dbReference>
<dbReference type="IntAct" id="Q62388">
    <property type="interactions" value="9"/>
</dbReference>
<dbReference type="STRING" id="10090.ENSMUSP00000156344"/>
<dbReference type="GlyGen" id="Q62388">
    <property type="glycosylation" value="3 sites"/>
</dbReference>
<dbReference type="iPTMnet" id="Q62388"/>
<dbReference type="PhosphoSitePlus" id="Q62388"/>
<dbReference type="jPOST" id="Q62388"/>
<dbReference type="PaxDb" id="10090-ENSMUSP00000113388"/>
<dbReference type="ProteomicsDB" id="277071"/>
<dbReference type="Pumba" id="Q62388"/>
<dbReference type="Antibodypedia" id="3596">
    <property type="antibodies" value="1461 antibodies from 48 providers"/>
</dbReference>
<dbReference type="DNASU" id="11920"/>
<dbReference type="Ensembl" id="ENSMUST00000232179.2">
    <property type="protein sequence ID" value="ENSMUSP00000156344.2"/>
    <property type="gene ID" value="ENSMUSG00000034218.17"/>
</dbReference>
<dbReference type="GeneID" id="11920"/>
<dbReference type="KEGG" id="mmu:11920"/>
<dbReference type="UCSC" id="uc009pmd.2">
    <property type="organism name" value="mouse"/>
</dbReference>
<dbReference type="AGR" id="MGI:107202"/>
<dbReference type="CTD" id="472"/>
<dbReference type="MGI" id="MGI:107202">
    <property type="gene designation" value="Atm"/>
</dbReference>
<dbReference type="VEuPathDB" id="HostDB:ENSMUSG00000034218"/>
<dbReference type="eggNOG" id="KOG0892">
    <property type="taxonomic scope" value="Eukaryota"/>
</dbReference>
<dbReference type="GeneTree" id="ENSGT00670000098061"/>
<dbReference type="HOGENOM" id="CLU_000178_3_1_1"/>
<dbReference type="InParanoid" id="Q62388"/>
<dbReference type="OMA" id="SEVYMKW"/>
<dbReference type="OrthoDB" id="381190at2759"/>
<dbReference type="PhylomeDB" id="Q62388"/>
<dbReference type="TreeFam" id="TF101182"/>
<dbReference type="Reactome" id="R-MMU-2559586">
    <property type="pathway name" value="DNA Damage/Telomere Stress Induced Senescence"/>
</dbReference>
<dbReference type="Reactome" id="R-MMU-349425">
    <property type="pathway name" value="Autodegradation of the E3 ubiquitin ligase COP1"/>
</dbReference>
<dbReference type="Reactome" id="R-MMU-5685938">
    <property type="pathway name" value="HDR through Single Strand Annealing (SSA)"/>
</dbReference>
<dbReference type="Reactome" id="R-MMU-5685942">
    <property type="pathway name" value="HDR through Homologous Recombination (HRR)"/>
</dbReference>
<dbReference type="Reactome" id="R-MMU-5693548">
    <property type="pathway name" value="Sensing of DNA Double Strand Breaks"/>
</dbReference>
<dbReference type="Reactome" id="R-MMU-5693565">
    <property type="pathway name" value="Recruitment and ATM-mediated phosphorylation of repair and signaling proteins at DNA double strand breaks"/>
</dbReference>
<dbReference type="Reactome" id="R-MMU-5693568">
    <property type="pathway name" value="Resolution of D-loop Structures through Holliday Junction Intermediates"/>
</dbReference>
<dbReference type="Reactome" id="R-MMU-5693571">
    <property type="pathway name" value="Nonhomologous End-Joining (NHEJ)"/>
</dbReference>
<dbReference type="Reactome" id="R-MMU-5693579">
    <property type="pathway name" value="Homologous DNA Pairing and Strand Exchange"/>
</dbReference>
<dbReference type="Reactome" id="R-MMU-5693607">
    <property type="pathway name" value="Processing of DNA double-strand break ends"/>
</dbReference>
<dbReference type="Reactome" id="R-MMU-5693616">
    <property type="pathway name" value="Presynaptic phase of homologous DNA pairing and strand exchange"/>
</dbReference>
<dbReference type="Reactome" id="R-MMU-6803204">
    <property type="pathway name" value="TP53 Regulates Transcription of Genes Involved in Cytochrome C Release"/>
</dbReference>
<dbReference type="Reactome" id="R-MMU-6803207">
    <property type="pathway name" value="TP53 Regulates Transcription of Caspase Activators and Caspases"/>
</dbReference>
<dbReference type="Reactome" id="R-MMU-6804756">
    <property type="pathway name" value="Regulation of TP53 Activity through Phosphorylation"/>
</dbReference>
<dbReference type="Reactome" id="R-MMU-6804757">
    <property type="pathway name" value="Regulation of TP53 Degradation"/>
</dbReference>
<dbReference type="Reactome" id="R-MMU-6804760">
    <property type="pathway name" value="Regulation of TP53 Activity through Methylation"/>
</dbReference>
<dbReference type="Reactome" id="R-MMU-69473">
    <property type="pathway name" value="G2/M DNA damage checkpoint"/>
</dbReference>
<dbReference type="Reactome" id="R-MMU-69541">
    <property type="pathway name" value="Stabilization of p53"/>
</dbReference>
<dbReference type="Reactome" id="R-MMU-9664873">
    <property type="pathway name" value="Pexophagy"/>
</dbReference>
<dbReference type="BioGRID-ORCS" id="11920">
    <property type="hits" value="20 hits in 116 CRISPR screens"/>
</dbReference>
<dbReference type="ChiTaRS" id="Atm">
    <property type="organism name" value="mouse"/>
</dbReference>
<dbReference type="PRO" id="PR:Q62388"/>
<dbReference type="Proteomes" id="UP000000589">
    <property type="component" value="Chromosome 9"/>
</dbReference>
<dbReference type="RNAct" id="Q62388">
    <property type="molecule type" value="protein"/>
</dbReference>
<dbReference type="Bgee" id="ENSMUSG00000034218">
    <property type="expression patterns" value="Expressed in parotid gland and 255 other cell types or tissues"/>
</dbReference>
<dbReference type="ExpressionAtlas" id="Q62388">
    <property type="expression patterns" value="baseline and differential"/>
</dbReference>
<dbReference type="GO" id="GO:0005813">
    <property type="term" value="C:centrosome"/>
    <property type="evidence" value="ECO:0000314"/>
    <property type="project" value="UniProtKB"/>
</dbReference>
<dbReference type="GO" id="GO:0000781">
    <property type="term" value="C:chromosome, telomeric region"/>
    <property type="evidence" value="ECO:0007669"/>
    <property type="project" value="Ensembl"/>
</dbReference>
<dbReference type="GO" id="GO:0005737">
    <property type="term" value="C:cytoplasm"/>
    <property type="evidence" value="ECO:0000314"/>
    <property type="project" value="UniProtKB"/>
</dbReference>
<dbReference type="GO" id="GO:1990391">
    <property type="term" value="C:DNA repair complex"/>
    <property type="evidence" value="ECO:0000266"/>
    <property type="project" value="MGI"/>
</dbReference>
<dbReference type="GO" id="GO:0098850">
    <property type="term" value="C:extrinsic component of synaptic vesicle membrane"/>
    <property type="evidence" value="ECO:0000314"/>
    <property type="project" value="SynGO"/>
</dbReference>
<dbReference type="GO" id="GO:0005730">
    <property type="term" value="C:nucleolus"/>
    <property type="evidence" value="ECO:0007669"/>
    <property type="project" value="Ensembl"/>
</dbReference>
<dbReference type="GO" id="GO:0005654">
    <property type="term" value="C:nucleoplasm"/>
    <property type="evidence" value="ECO:0000304"/>
    <property type="project" value="Reactome"/>
</dbReference>
<dbReference type="GO" id="GO:0005634">
    <property type="term" value="C:nucleus"/>
    <property type="evidence" value="ECO:0000314"/>
    <property type="project" value="UniProtKB"/>
</dbReference>
<dbReference type="GO" id="GO:0005782">
    <property type="term" value="C:peroxisomal matrix"/>
    <property type="evidence" value="ECO:0000250"/>
    <property type="project" value="UniProtKB"/>
</dbReference>
<dbReference type="GO" id="GO:0035861">
    <property type="term" value="C:site of double-strand break"/>
    <property type="evidence" value="ECO:0000250"/>
    <property type="project" value="UniProtKB"/>
</dbReference>
<dbReference type="GO" id="GO:0005819">
    <property type="term" value="C:spindle"/>
    <property type="evidence" value="ECO:0000314"/>
    <property type="project" value="MGI"/>
</dbReference>
<dbReference type="GO" id="GO:0016303">
    <property type="term" value="F:1-phosphatidylinositol-3-kinase activity"/>
    <property type="evidence" value="ECO:0000250"/>
    <property type="project" value="UniProtKB"/>
</dbReference>
<dbReference type="GO" id="GO:0005524">
    <property type="term" value="F:ATP binding"/>
    <property type="evidence" value="ECO:0007669"/>
    <property type="project" value="UniProtKB-KW"/>
</dbReference>
<dbReference type="GO" id="GO:0003677">
    <property type="term" value="F:DNA binding"/>
    <property type="evidence" value="ECO:0007669"/>
    <property type="project" value="UniProtKB-KW"/>
</dbReference>
<dbReference type="GO" id="GO:0004677">
    <property type="term" value="F:DNA-dependent protein kinase activity"/>
    <property type="evidence" value="ECO:0007669"/>
    <property type="project" value="Ensembl"/>
</dbReference>
<dbReference type="GO" id="GO:0035979">
    <property type="term" value="F:histone H2AXS139 kinase activity"/>
    <property type="evidence" value="ECO:0000314"/>
    <property type="project" value="UniProtKB"/>
</dbReference>
<dbReference type="GO" id="GO:0042802">
    <property type="term" value="F:identical protein binding"/>
    <property type="evidence" value="ECO:0007669"/>
    <property type="project" value="Ensembl"/>
</dbReference>
<dbReference type="GO" id="GO:0004672">
    <property type="term" value="F:protein kinase activity"/>
    <property type="evidence" value="ECO:0000314"/>
    <property type="project" value="MGI"/>
</dbReference>
<dbReference type="GO" id="GO:0106310">
    <property type="term" value="F:protein serine kinase activity"/>
    <property type="evidence" value="ECO:0007669"/>
    <property type="project" value="RHEA"/>
</dbReference>
<dbReference type="GO" id="GO:0004674">
    <property type="term" value="F:protein serine/threonine kinase activity"/>
    <property type="evidence" value="ECO:0000250"/>
    <property type="project" value="UniProtKB"/>
</dbReference>
<dbReference type="GO" id="GO:0044877">
    <property type="term" value="F:protein-containing complex binding"/>
    <property type="evidence" value="ECO:0007669"/>
    <property type="project" value="Ensembl"/>
</dbReference>
<dbReference type="GO" id="GO:0007420">
    <property type="term" value="P:brain development"/>
    <property type="evidence" value="ECO:0000316"/>
    <property type="project" value="MGI"/>
</dbReference>
<dbReference type="GO" id="GO:0071480">
    <property type="term" value="P:cellular response to gamma radiation"/>
    <property type="evidence" value="ECO:0007669"/>
    <property type="project" value="Ensembl"/>
</dbReference>
<dbReference type="GO" id="GO:0071500">
    <property type="term" value="P:cellular response to nitrosative stress"/>
    <property type="evidence" value="ECO:0007669"/>
    <property type="project" value="Ensembl"/>
</dbReference>
<dbReference type="GO" id="GO:0034614">
    <property type="term" value="P:cellular response to reactive oxygen species"/>
    <property type="evidence" value="ECO:0007669"/>
    <property type="project" value="Ensembl"/>
</dbReference>
<dbReference type="GO" id="GO:0071300">
    <property type="term" value="P:cellular response to retinoic acid"/>
    <property type="evidence" value="ECO:0000315"/>
    <property type="project" value="ARUK-UCL"/>
</dbReference>
<dbReference type="GO" id="GO:0071481">
    <property type="term" value="P:cellular response to X-ray"/>
    <property type="evidence" value="ECO:0007669"/>
    <property type="project" value="Ensembl"/>
</dbReference>
<dbReference type="GO" id="GO:0070192">
    <property type="term" value="P:chromosome organization involved in meiotic cell cycle"/>
    <property type="evidence" value="ECO:0000315"/>
    <property type="project" value="MGI"/>
</dbReference>
<dbReference type="GO" id="GO:0008340">
    <property type="term" value="P:determination of adult lifespan"/>
    <property type="evidence" value="ECO:0000316"/>
    <property type="project" value="MGI"/>
</dbReference>
<dbReference type="GO" id="GO:0000077">
    <property type="term" value="P:DNA damage checkpoint signaling"/>
    <property type="evidence" value="ECO:0000315"/>
    <property type="project" value="MGI"/>
</dbReference>
<dbReference type="GO" id="GO:0006974">
    <property type="term" value="P:DNA damage response"/>
    <property type="evidence" value="ECO:0000316"/>
    <property type="project" value="MGI"/>
</dbReference>
<dbReference type="GO" id="GO:0000729">
    <property type="term" value="P:DNA double-strand break processing"/>
    <property type="evidence" value="ECO:0007669"/>
    <property type="project" value="Ensembl"/>
</dbReference>
<dbReference type="GO" id="GO:0006281">
    <property type="term" value="P:DNA repair"/>
    <property type="evidence" value="ECO:0000314"/>
    <property type="project" value="MGI"/>
</dbReference>
<dbReference type="GO" id="GO:0006302">
    <property type="term" value="P:double-strand break repair"/>
    <property type="evidence" value="ECO:0000250"/>
    <property type="project" value="UniProtKB"/>
</dbReference>
<dbReference type="GO" id="GO:0000724">
    <property type="term" value="P:double-strand break repair via homologous recombination"/>
    <property type="evidence" value="ECO:0000315"/>
    <property type="project" value="MGI"/>
</dbReference>
<dbReference type="GO" id="GO:0097695">
    <property type="term" value="P:establishment of protein-containing complex localization to telomere"/>
    <property type="evidence" value="ECO:0007669"/>
    <property type="project" value="Ensembl"/>
</dbReference>
<dbReference type="GO" id="GO:0097694">
    <property type="term" value="P:establishment of RNA localization to telomere"/>
    <property type="evidence" value="ECO:0007669"/>
    <property type="project" value="Ensembl"/>
</dbReference>
<dbReference type="GO" id="GO:0007292">
    <property type="term" value="P:female gamete generation"/>
    <property type="evidence" value="ECO:0000315"/>
    <property type="project" value="MGI"/>
</dbReference>
<dbReference type="GO" id="GO:0008585">
    <property type="term" value="P:female gonad development"/>
    <property type="evidence" value="ECO:0000315"/>
    <property type="project" value="MGI"/>
</dbReference>
<dbReference type="GO" id="GO:0007143">
    <property type="term" value="P:female meiotic nuclear division"/>
    <property type="evidence" value="ECO:0000315"/>
    <property type="project" value="MGI"/>
</dbReference>
<dbReference type="GO" id="GO:0007507">
    <property type="term" value="P:heart development"/>
    <property type="evidence" value="ECO:0000316"/>
    <property type="project" value="MGI"/>
</dbReference>
<dbReference type="GO" id="GO:0071044">
    <property type="term" value="P:histone mRNA catabolic process"/>
    <property type="evidence" value="ECO:0000250"/>
    <property type="project" value="UniProtKB"/>
</dbReference>
<dbReference type="GO" id="GO:0002376">
    <property type="term" value="P:immune system process"/>
    <property type="evidence" value="ECO:0000315"/>
    <property type="project" value="MGI"/>
</dbReference>
<dbReference type="GO" id="GO:0008630">
    <property type="term" value="P:intrinsic apoptotic signaling pathway in response to DNA damage"/>
    <property type="evidence" value="ECO:0000315"/>
    <property type="project" value="MGI"/>
</dbReference>
<dbReference type="GO" id="GO:0042159">
    <property type="term" value="P:lipoprotein catabolic process"/>
    <property type="evidence" value="ECO:0000316"/>
    <property type="project" value="MGI"/>
</dbReference>
<dbReference type="GO" id="GO:0007140">
    <property type="term" value="P:male meiotic nuclear division"/>
    <property type="evidence" value="ECO:0000315"/>
    <property type="project" value="MGI"/>
</dbReference>
<dbReference type="GO" id="GO:0045141">
    <property type="term" value="P:meiotic telomere clustering"/>
    <property type="evidence" value="ECO:0000315"/>
    <property type="project" value="MGI"/>
</dbReference>
<dbReference type="GO" id="GO:0007095">
    <property type="term" value="P:mitotic G2 DNA damage checkpoint signaling"/>
    <property type="evidence" value="ECO:0000266"/>
    <property type="project" value="UniProt"/>
</dbReference>
<dbReference type="GO" id="GO:0007094">
    <property type="term" value="P:mitotic spindle assembly checkpoint signaling"/>
    <property type="evidence" value="ECO:0000250"/>
    <property type="project" value="UniProtKB"/>
</dbReference>
<dbReference type="GO" id="GO:0035264">
    <property type="term" value="P:multicellular organism growth"/>
    <property type="evidence" value="ECO:0000315"/>
    <property type="project" value="MGI"/>
</dbReference>
<dbReference type="GO" id="GO:0030889">
    <property type="term" value="P:negative regulation of B cell proliferation"/>
    <property type="evidence" value="ECO:0007669"/>
    <property type="project" value="Ensembl"/>
</dbReference>
<dbReference type="GO" id="GO:1904354">
    <property type="term" value="P:negative regulation of telomere capping"/>
    <property type="evidence" value="ECO:0007669"/>
    <property type="project" value="Ensembl"/>
</dbReference>
<dbReference type="GO" id="GO:1904262">
    <property type="term" value="P:negative regulation of TORC1 signaling"/>
    <property type="evidence" value="ECO:0000315"/>
    <property type="project" value="ParkinsonsUK-UCL"/>
</dbReference>
<dbReference type="GO" id="GO:0051402">
    <property type="term" value="P:neuron apoptotic process"/>
    <property type="evidence" value="ECO:0000316"/>
    <property type="project" value="MGI"/>
</dbReference>
<dbReference type="GO" id="GO:0048599">
    <property type="term" value="P:oocyte development"/>
    <property type="evidence" value="ECO:0000315"/>
    <property type="project" value="MGI"/>
</dbReference>
<dbReference type="GO" id="GO:0001541">
    <property type="term" value="P:ovarian follicle development"/>
    <property type="evidence" value="ECO:0000315"/>
    <property type="project" value="MGI"/>
</dbReference>
<dbReference type="GO" id="GO:0000425">
    <property type="term" value="P:pexophagy"/>
    <property type="evidence" value="ECO:0000250"/>
    <property type="project" value="UniProtKB"/>
</dbReference>
<dbReference type="GO" id="GO:0045785">
    <property type="term" value="P:positive regulation of cell adhesion"/>
    <property type="evidence" value="ECO:0000315"/>
    <property type="project" value="ARUK-UCL"/>
</dbReference>
<dbReference type="GO" id="GO:0030335">
    <property type="term" value="P:positive regulation of cell migration"/>
    <property type="evidence" value="ECO:0007669"/>
    <property type="project" value="Ensembl"/>
</dbReference>
<dbReference type="GO" id="GO:0043517">
    <property type="term" value="P:positive regulation of DNA damage response, signal transduction by p53 class mediator"/>
    <property type="evidence" value="ECO:0007669"/>
    <property type="project" value="Ensembl"/>
</dbReference>
<dbReference type="GO" id="GO:2000781">
    <property type="term" value="P:positive regulation of double-strand break repair"/>
    <property type="evidence" value="ECO:0007669"/>
    <property type="project" value="Ensembl"/>
</dbReference>
<dbReference type="GO" id="GO:0010628">
    <property type="term" value="P:positive regulation of gene expression"/>
    <property type="evidence" value="ECO:0007669"/>
    <property type="project" value="Ensembl"/>
</dbReference>
<dbReference type="GO" id="GO:0043525">
    <property type="term" value="P:positive regulation of neuron apoptotic process"/>
    <property type="evidence" value="ECO:0000316"/>
    <property type="project" value="MGI"/>
</dbReference>
<dbReference type="GO" id="GO:1904884">
    <property type="term" value="P:positive regulation of telomerase catalytic core complex assembly"/>
    <property type="evidence" value="ECO:0007669"/>
    <property type="project" value="Ensembl"/>
</dbReference>
<dbReference type="GO" id="GO:0032212">
    <property type="term" value="P:positive regulation of telomere maintenance via telomerase"/>
    <property type="evidence" value="ECO:0000315"/>
    <property type="project" value="BHF-UCL"/>
</dbReference>
<dbReference type="GO" id="GO:0045944">
    <property type="term" value="P:positive regulation of transcription by RNA polymerase II"/>
    <property type="evidence" value="ECO:0000315"/>
    <property type="project" value="ARUK-UCL"/>
</dbReference>
<dbReference type="GO" id="GO:0009791">
    <property type="term" value="P:post-embryonic development"/>
    <property type="evidence" value="ECO:0000315"/>
    <property type="project" value="MGI"/>
</dbReference>
<dbReference type="GO" id="GO:0002331">
    <property type="term" value="P:pre-B cell allelic exclusion"/>
    <property type="evidence" value="ECO:0000315"/>
    <property type="project" value="UniProtKB"/>
</dbReference>
<dbReference type="GO" id="GO:0046777">
    <property type="term" value="P:protein autophosphorylation"/>
    <property type="evidence" value="ECO:0000250"/>
    <property type="project" value="UniProtKB"/>
</dbReference>
<dbReference type="GO" id="GO:0010506">
    <property type="term" value="P:regulation of autophagy"/>
    <property type="evidence" value="ECO:0000315"/>
    <property type="project" value="ParkinsonsUK-UCL"/>
</dbReference>
<dbReference type="GO" id="GO:0090399">
    <property type="term" value="P:replicative senescence"/>
    <property type="evidence" value="ECO:0007669"/>
    <property type="project" value="Ensembl"/>
</dbReference>
<dbReference type="GO" id="GO:0010212">
    <property type="term" value="P:response to ionizing radiation"/>
    <property type="evidence" value="ECO:0000316"/>
    <property type="project" value="MGI"/>
</dbReference>
<dbReference type="GO" id="GO:0042770">
    <property type="term" value="P:signal transduction in response to DNA damage"/>
    <property type="evidence" value="ECO:0000250"/>
    <property type="project" value="UniProtKB"/>
</dbReference>
<dbReference type="GO" id="GO:0001756">
    <property type="term" value="P:somitogenesis"/>
    <property type="evidence" value="ECO:0000316"/>
    <property type="project" value="MGI"/>
</dbReference>
<dbReference type="GO" id="GO:0048538">
    <property type="term" value="P:thymus development"/>
    <property type="evidence" value="ECO:0000315"/>
    <property type="project" value="MGI"/>
</dbReference>
<dbReference type="GO" id="GO:0033151">
    <property type="term" value="P:V(D)J recombination"/>
    <property type="evidence" value="ECO:0000316"/>
    <property type="project" value="MGI"/>
</dbReference>
<dbReference type="CDD" id="cd05171">
    <property type="entry name" value="PIKKc_ATM"/>
    <property type="match status" value="1"/>
</dbReference>
<dbReference type="FunFam" id="1.10.1070.11:FF:000011">
    <property type="entry name" value="Serine-protein kinase ATM"/>
    <property type="match status" value="1"/>
</dbReference>
<dbReference type="FunFam" id="3.30.1010.10:FF:000015">
    <property type="entry name" value="Serine-protein kinase ATM"/>
    <property type="match status" value="1"/>
</dbReference>
<dbReference type="Gene3D" id="1.10.1070.11">
    <property type="entry name" value="Phosphatidylinositol 3-/4-kinase, catalytic domain"/>
    <property type="match status" value="1"/>
</dbReference>
<dbReference type="Gene3D" id="3.30.1010.10">
    <property type="entry name" value="Phosphatidylinositol 3-kinase Catalytic Subunit, Chain A, domain 4"/>
    <property type="match status" value="1"/>
</dbReference>
<dbReference type="InterPro" id="IPR016024">
    <property type="entry name" value="ARM-type_fold"/>
</dbReference>
<dbReference type="InterPro" id="IPR038980">
    <property type="entry name" value="ATM_plant"/>
</dbReference>
<dbReference type="InterPro" id="IPR003152">
    <property type="entry name" value="FATC_dom"/>
</dbReference>
<dbReference type="InterPro" id="IPR011009">
    <property type="entry name" value="Kinase-like_dom_sf"/>
</dbReference>
<dbReference type="InterPro" id="IPR000403">
    <property type="entry name" value="PI3/4_kinase_cat_dom"/>
</dbReference>
<dbReference type="InterPro" id="IPR036940">
    <property type="entry name" value="PI3/4_kinase_cat_sf"/>
</dbReference>
<dbReference type="InterPro" id="IPR018936">
    <property type="entry name" value="PI3/4_kinase_CS"/>
</dbReference>
<dbReference type="InterPro" id="IPR003151">
    <property type="entry name" value="PIK-rel_kinase_FAT"/>
</dbReference>
<dbReference type="InterPro" id="IPR014009">
    <property type="entry name" value="PIK_FAT"/>
</dbReference>
<dbReference type="InterPro" id="IPR044107">
    <property type="entry name" value="PIKKc_ATM"/>
</dbReference>
<dbReference type="InterPro" id="IPR021668">
    <property type="entry name" value="TAN"/>
</dbReference>
<dbReference type="PANTHER" id="PTHR37079">
    <property type="entry name" value="SERINE/THREONINE-PROTEIN KINASE ATM"/>
    <property type="match status" value="1"/>
</dbReference>
<dbReference type="PANTHER" id="PTHR37079:SF4">
    <property type="entry name" value="SERINE_THREONINE-PROTEIN KINASE ATM"/>
    <property type="match status" value="1"/>
</dbReference>
<dbReference type="Pfam" id="PF02259">
    <property type="entry name" value="FAT"/>
    <property type="match status" value="1"/>
</dbReference>
<dbReference type="Pfam" id="PF02260">
    <property type="entry name" value="FATC"/>
    <property type="match status" value="1"/>
</dbReference>
<dbReference type="Pfam" id="PF00454">
    <property type="entry name" value="PI3_PI4_kinase"/>
    <property type="match status" value="1"/>
</dbReference>
<dbReference type="Pfam" id="PF11640">
    <property type="entry name" value="TAN"/>
    <property type="match status" value="1"/>
</dbReference>
<dbReference type="SMART" id="SM01343">
    <property type="entry name" value="FATC"/>
    <property type="match status" value="1"/>
</dbReference>
<dbReference type="SMART" id="SM00146">
    <property type="entry name" value="PI3Kc"/>
    <property type="match status" value="1"/>
</dbReference>
<dbReference type="SMART" id="SM01342">
    <property type="entry name" value="TAN"/>
    <property type="match status" value="1"/>
</dbReference>
<dbReference type="SUPFAM" id="SSF48371">
    <property type="entry name" value="ARM repeat"/>
    <property type="match status" value="2"/>
</dbReference>
<dbReference type="SUPFAM" id="SSF56112">
    <property type="entry name" value="Protein kinase-like (PK-like)"/>
    <property type="match status" value="1"/>
</dbReference>
<dbReference type="PROSITE" id="PS51189">
    <property type="entry name" value="FAT"/>
    <property type="match status" value="1"/>
</dbReference>
<dbReference type="PROSITE" id="PS51190">
    <property type="entry name" value="FATC"/>
    <property type="match status" value="1"/>
</dbReference>
<dbReference type="PROSITE" id="PS00915">
    <property type="entry name" value="PI3_4_KINASE_1"/>
    <property type="match status" value="1"/>
</dbReference>
<dbReference type="PROSITE" id="PS00916">
    <property type="entry name" value="PI3_4_KINASE_2"/>
    <property type="match status" value="1"/>
</dbReference>
<dbReference type="PROSITE" id="PS50290">
    <property type="entry name" value="PI3_4_KINASE_3"/>
    <property type="match status" value="1"/>
</dbReference>
<proteinExistence type="evidence at protein level"/>
<reference key="1">
    <citation type="journal article" date="1996" name="Genomics">
        <title>Identification and chromosomal localization of Atm, the mouse homolog of the ataxia-telangiectasia gene.</title>
        <authorList>
            <person name="Pecker I."/>
            <person name="Avraham K.B."/>
            <person name="Gilbert D.J."/>
            <person name="Savitsky K."/>
            <person name="Rotman G."/>
            <person name="Harnik R."/>
            <person name="Fukao T."/>
            <person name="Schroeck E."/>
            <person name="Hirotsume S."/>
            <person name="Tagle D.A."/>
            <person name="Collins F.S."/>
            <person name="Wynshaw-Boris A."/>
            <person name="Ried T."/>
            <person name="Copeland N.G."/>
            <person name="Jenkins N.A."/>
            <person name="Shiloh Y."/>
            <person name="Ziv Y."/>
        </authorList>
    </citation>
    <scope>NUCLEOTIDE SEQUENCE [MRNA]</scope>
    <source>
        <tissue>Brain</tissue>
    </source>
</reference>
<reference key="2">
    <citation type="journal article" date="2009" name="PLoS Biol.">
        <title>Lineage-specific biology revealed by a finished genome assembly of the mouse.</title>
        <authorList>
            <person name="Church D.M."/>
            <person name="Goodstadt L."/>
            <person name="Hillier L.W."/>
            <person name="Zody M.C."/>
            <person name="Goldstein S."/>
            <person name="She X."/>
            <person name="Bult C.J."/>
            <person name="Agarwala R."/>
            <person name="Cherry J.L."/>
            <person name="DiCuccio M."/>
            <person name="Hlavina W."/>
            <person name="Kapustin Y."/>
            <person name="Meric P."/>
            <person name="Maglott D."/>
            <person name="Birtle Z."/>
            <person name="Marques A.C."/>
            <person name="Graves T."/>
            <person name="Zhou S."/>
            <person name="Teague B."/>
            <person name="Potamousis K."/>
            <person name="Churas C."/>
            <person name="Place M."/>
            <person name="Herschleb J."/>
            <person name="Runnheim R."/>
            <person name="Forrest D."/>
            <person name="Amos-Landgraf J."/>
            <person name="Schwartz D.C."/>
            <person name="Cheng Z."/>
            <person name="Lindblad-Toh K."/>
            <person name="Eichler E.E."/>
            <person name="Ponting C.P."/>
        </authorList>
    </citation>
    <scope>NUCLEOTIDE SEQUENCE [LARGE SCALE GENOMIC DNA]</scope>
    <source>
        <strain>C57BL/6J</strain>
    </source>
</reference>
<reference key="3">
    <citation type="journal article" date="1996" name="Cell">
        <title>Atm-deficient mice: a paradigm of ataxia telangiectasia.</title>
        <authorList>
            <person name="Barlow C."/>
            <person name="Hirotsune S."/>
            <person name="Paylor R."/>
            <person name="Liyanage M."/>
            <person name="Eckhaus M."/>
            <person name="Collins F."/>
            <person name="Shiloh Y."/>
            <person name="Crawley J.N."/>
            <person name="Ried T."/>
            <person name="Tagle D."/>
            <person name="Wynshaw-Boris A."/>
        </authorList>
    </citation>
    <scope>DISRUPTION PHENOTYPE</scope>
</reference>
<reference key="4">
    <citation type="journal article" date="1996" name="Oncogene">
        <title>Analysis of the ATM protein in wild-type and ataxia telangiectasia cells.</title>
        <authorList>
            <person name="Lakin N.D."/>
            <person name="Weber P."/>
            <person name="Stankovic T."/>
            <person name="Rottinghaus S.T."/>
            <person name="Taylor A.M.R."/>
            <person name="Jackson S.P."/>
        </authorList>
    </citation>
    <scope>SUBCELLULAR LOCATION</scope>
</reference>
<reference key="5">
    <citation type="journal article" date="1998" name="Neuroscience">
        <title>Atm expression patterns suggest a contribution from the peripheral nervous system to the phenotype of ataxia-telangiectasia.</title>
        <authorList>
            <person name="Soares H.D."/>
            <person name="Morgan J.I."/>
            <person name="McKinnon P.J."/>
        </authorList>
    </citation>
    <scope>DEVELOPMENTAL STAGE</scope>
    <source>
        <strain>B6C3-F1</strain>
    </source>
</reference>
<reference key="6">
    <citation type="journal article" date="1998" name="Proc. Natl. Acad. Sci. U.S.A.">
        <title>ATM binds to beta-adaptin in cytoplasmic vesicles.</title>
        <authorList>
            <person name="Lim D.-S."/>
            <person name="Kirsch D.G."/>
            <person name="Canman C.E."/>
            <person name="Ahn J.-H."/>
            <person name="Ziv Y."/>
            <person name="Newman L.S."/>
            <person name="Darnell R.B."/>
            <person name="Shiloh Y."/>
            <person name="Kastan M.B."/>
        </authorList>
    </citation>
    <scope>INTERACTION WITH AP2B1 AND AP3B2</scope>
</reference>
<reference key="7">
    <citation type="journal article" date="2001" name="J. Biol. Chem.">
        <title>ATM phosphorylates histone H2AX in response to DNA double-strand breaks.</title>
        <authorList>
            <person name="Burma S."/>
            <person name="Chen B.P."/>
            <person name="Murphy M."/>
            <person name="Kurimasa A."/>
            <person name="Chen D.J."/>
        </authorList>
    </citation>
    <scope>FUNCTION IN PHOSPHORYLATION OF H2AX</scope>
    <scope>CATALYTIC ACTIVITY</scope>
</reference>
<reference key="8">
    <citation type="journal article" date="2008" name="EMBO Rep.">
        <title>ATM and Chk2 kinase target the p53 cofactor Strap.</title>
        <authorList>
            <person name="Adams C.J."/>
            <person name="Graham A.L."/>
            <person name="Jansson M."/>
            <person name="Coutts A.S."/>
            <person name="Edelmann M."/>
            <person name="Smith L."/>
            <person name="Kessler B."/>
            <person name="La Thangue N.B."/>
        </authorList>
    </citation>
    <scope>FUNCTION</scope>
</reference>
<reference key="9">
    <citation type="journal article" date="2008" name="J. Cell Biol.">
        <title>Multiple autophosphorylation sites are dispensable for murine ATM activation in vivo.</title>
        <authorList>
            <person name="Daniel J.A."/>
            <person name="Pellegrini M."/>
            <person name="Lee J.H."/>
            <person name="Paull T.T."/>
            <person name="Feigenbaum L."/>
            <person name="Nussenzweig A."/>
        </authorList>
    </citation>
    <scope>PHOSPHORYLATION AT SER-367; SER-1899 AND SER-1987</scope>
    <scope>FUNCTION</scope>
    <scope>MUTAGENESIS OF SER-367; SER-1899 AND SER-1987</scope>
</reference>
<reference key="10">
    <citation type="journal article" date="2009" name="Nat. Immunol.">
        <title>RAG-1 and ATM coordinate monoallelic recombination and nuclear positioning of immunoglobulin loci.</title>
        <authorList>
            <person name="Hewitt S.L."/>
            <person name="Yin B."/>
            <person name="Ji Y."/>
            <person name="Chaumeil J."/>
            <person name="Marszalek K."/>
            <person name="Tenthorey J."/>
            <person name="Salvagiotto G."/>
            <person name="Steinel N."/>
            <person name="Ramsey L.B."/>
            <person name="Ghysdael J."/>
            <person name="Farrar M.A."/>
            <person name="Sleckman B.P."/>
            <person name="Schatz D.G."/>
            <person name="Busslinger M."/>
            <person name="Bassing C.H."/>
            <person name="Skok J.A."/>
        </authorList>
    </citation>
    <scope>FUNCTION</scope>
</reference>
<reference key="11">
    <citation type="journal article" date="2010" name="Cell">
        <title>A tissue-specific atlas of mouse protein phosphorylation and expression.</title>
        <authorList>
            <person name="Huttlin E.L."/>
            <person name="Jedrychowski M.P."/>
            <person name="Elias J.E."/>
            <person name="Goswami T."/>
            <person name="Rad R."/>
            <person name="Beausoleil S.A."/>
            <person name="Villen J."/>
            <person name="Haas W."/>
            <person name="Sowa M.E."/>
            <person name="Gygi S.P."/>
        </authorList>
    </citation>
    <scope>PHOSPHORYLATION [LARGE SCALE ANALYSIS] AT SER-1987</scope>
    <scope>IDENTIFICATION BY MASS SPECTROMETRY [LARGE SCALE ANALYSIS]</scope>
    <source>
        <tissue>Spleen</tissue>
        <tissue>Testis</tissue>
    </source>
</reference>
<reference key="12">
    <citation type="journal article" date="2015" name="Cell Stem Cell">
        <title>Filia Is an ESC-Specific Regulator of DNA Damage Response and Safeguards Genomic Stability.</title>
        <authorList>
            <person name="Zhao B."/>
            <person name="Zhang W.D."/>
            <person name="Duan Y.L."/>
            <person name="Lu Y.Q."/>
            <person name="Cun Y.X."/>
            <person name="Li C.H."/>
            <person name="Guo K."/>
            <person name="Nie W.H."/>
            <person name="Li L."/>
            <person name="Zhang R."/>
            <person name="Zheng P."/>
        </authorList>
    </citation>
    <scope>SUBCELLULAR LOCATION</scope>
</reference>
<reference key="13">
    <citation type="journal article" date="2018" name="Mol. Cell">
        <title>MRI is a DNA damage response adaptor during classical non-homologous end joining.</title>
        <authorList>
            <person name="Hung P.J."/>
            <person name="Johnson B."/>
            <person name="Chen B.R."/>
            <person name="Byrum A.K."/>
            <person name="Bredemeyer A.L."/>
            <person name="Yewdell W.T."/>
            <person name="Johnson T.E."/>
            <person name="Lee B.J."/>
            <person name="Deivasigamani S."/>
            <person name="Hindi I."/>
            <person name="Amatya P."/>
            <person name="Gross M.L."/>
            <person name="Paull T.T."/>
            <person name="Pisapia D.J."/>
            <person name="Chaudhuri J."/>
            <person name="Petrini J.J.H."/>
            <person name="Mosammaparast N."/>
            <person name="Amarasinghe G.K."/>
            <person name="Zha S."/>
            <person name="Tyler J.K."/>
            <person name="Sleckman B.P."/>
        </authorList>
    </citation>
    <scope>INTERACTION WITH CYREN</scope>
</reference>
<feature type="initiator methionine" description="Removed" evidence="2">
    <location>
        <position position="1"/>
    </location>
</feature>
<feature type="chain" id="PRO_0000088841" description="Serine-protein kinase ATM">
    <location>
        <begin position="2"/>
        <end position="3066"/>
    </location>
</feature>
<feature type="domain" description="FAT" evidence="4">
    <location>
        <begin position="1946"/>
        <end position="2576"/>
    </location>
</feature>
<feature type="domain" description="PI3K/PI4K catalytic" evidence="3">
    <location>
        <begin position="2696"/>
        <end position="3009"/>
    </location>
</feature>
<feature type="domain" description="FATC" evidence="4 5">
    <location>
        <begin position="3034"/>
        <end position="3066"/>
    </location>
</feature>
<feature type="region of interest" description="Disordered" evidence="6">
    <location>
        <begin position="829"/>
        <end position="862"/>
    </location>
</feature>
<feature type="region of interest" description="Interaction with ABL1" evidence="1">
    <location>
        <begin position="1380"/>
        <end position="1389"/>
    </location>
</feature>
<feature type="region of interest" description="Disordered" evidence="6">
    <location>
        <begin position="1973"/>
        <end position="2000"/>
    </location>
</feature>
<feature type="region of interest" description="Disordered" evidence="6">
    <location>
        <begin position="2585"/>
        <end position="2607"/>
    </location>
</feature>
<feature type="region of interest" description="G-loop" evidence="3">
    <location>
        <begin position="2702"/>
        <end position="2708"/>
    </location>
</feature>
<feature type="region of interest" description="Catalytic loop" evidence="3">
    <location>
        <begin position="2877"/>
        <end position="2885"/>
    </location>
</feature>
<feature type="region of interest" description="Activation loop" evidence="3">
    <location>
        <begin position="2897"/>
        <end position="2921"/>
    </location>
</feature>
<feature type="region of interest" description="Disordered" evidence="6">
    <location>
        <begin position="2986"/>
        <end position="3007"/>
    </location>
</feature>
<feature type="short sequence motif" description="Microbody targeting signal; atypical" evidence="2">
    <location>
        <begin position="3056"/>
        <end position="3058"/>
    </location>
</feature>
<feature type="compositionally biased region" description="Basic and acidic residues" evidence="6">
    <location>
        <begin position="1973"/>
        <end position="1982"/>
    </location>
</feature>
<feature type="compositionally biased region" description="Polar residues" evidence="6">
    <location>
        <begin position="1985"/>
        <end position="1996"/>
    </location>
</feature>
<feature type="compositionally biased region" description="Basic and acidic residues" evidence="6">
    <location>
        <begin position="2597"/>
        <end position="2607"/>
    </location>
</feature>
<feature type="compositionally biased region" description="Polar residues" evidence="6">
    <location>
        <begin position="2991"/>
        <end position="3007"/>
    </location>
</feature>
<feature type="modified residue" description="N-acetylserine" evidence="2">
    <location>
        <position position="2"/>
    </location>
</feature>
<feature type="modified residue" description="Phosphoserine; by autocatalysis" evidence="8">
    <location>
        <position position="367"/>
    </location>
</feature>
<feature type="modified residue" description="Phosphoserine; by autocatalysis" evidence="8">
    <location>
        <position position="1899"/>
    </location>
</feature>
<feature type="modified residue" description="Phosphoserine; by autocatalysis" evidence="8 16">
    <location>
        <position position="1987"/>
    </location>
</feature>
<feature type="modified residue" description="Phosphoserine" evidence="2">
    <location>
        <position position="3006"/>
    </location>
</feature>
<feature type="modified residue" description="N6-acetyllysine" evidence="2">
    <location>
        <position position="3026"/>
    </location>
</feature>
<feature type="mutagenesis site" description="Retains genomic stability and cell cycle checkpoint correction and kinase activity towards downstream targets; when associated with A-1987. Retains genomic stability, cell cycle checkpoint correction and kinase activity on downstream targets; when associated with A-1899 and A-1987." evidence="8">
    <original>S</original>
    <variation>A</variation>
    <location>
        <position position="367"/>
    </location>
</feature>
<feature type="mutagenesis site" description="Retains genomic stability, cell cycle checkpoint correction and kinase activity on downstream targets; when associated with A-367 and A-1987." evidence="8">
    <original>S</original>
    <variation>A</variation>
    <location>
        <position position="1899"/>
    </location>
</feature>
<feature type="mutagenesis site" description="Retains genomic stability and cell cycle checkpoint correction and kinase activity towards downstream targets; when associated with A-367. Retains genomic stability, cell cycle checkpoint correction and kinase activity on downstream targets; when associated with A-367 and A-1987." evidence="8">
    <original>S</original>
    <variation>A</variation>
    <location>
        <position position="1987"/>
    </location>
</feature>
<feature type="sequence conflict" description="In Ref. 1; AAC52673." evidence="15" ref="1">
    <original>S</original>
    <variation>R</variation>
    <location>
        <position position="600"/>
    </location>
</feature>
<gene>
    <name type="primary">Atm</name>
</gene>
<accession>Q62388</accession>
<accession>E9QNY7</accession>
<keyword id="KW-0007">Acetylation</keyword>
<keyword id="KW-0067">ATP-binding</keyword>
<keyword id="KW-0131">Cell cycle</keyword>
<keyword id="KW-0963">Cytoplasm</keyword>
<keyword id="KW-0968">Cytoplasmic vesicle</keyword>
<keyword id="KW-0206">Cytoskeleton</keyword>
<keyword id="KW-0227">DNA damage</keyword>
<keyword id="KW-0238">DNA-binding</keyword>
<keyword id="KW-0418">Kinase</keyword>
<keyword id="KW-0547">Nucleotide-binding</keyword>
<keyword id="KW-0539">Nucleus</keyword>
<keyword id="KW-0576">Peroxisome</keyword>
<keyword id="KW-0597">Phosphoprotein</keyword>
<keyword id="KW-1185">Reference proteome</keyword>
<keyword id="KW-0723">Serine/threonine-protein kinase</keyword>
<keyword id="KW-0808">Transferase</keyword>
<keyword id="KW-0043">Tumor suppressor</keyword>